<proteinExistence type="evidence at transcript level"/>
<evidence type="ECO:0000255" key="1"/>
<evidence type="ECO:0000255" key="2">
    <source>
        <dbReference type="PROSITE-ProRule" id="PRU10117"/>
    </source>
</evidence>
<evidence type="ECO:0000305" key="3"/>
<feature type="transit peptide" description="Mitochondrion" evidence="1">
    <location>
        <begin position="1"/>
        <end position="33"/>
    </location>
</feature>
<feature type="chain" id="PRO_0000005480" description="Citrate synthase, mitochondrial">
    <location>
        <begin position="34"/>
        <end position="469"/>
    </location>
</feature>
<feature type="active site" evidence="2">
    <location>
        <position position="352"/>
    </location>
</feature>
<feature type="sequence conflict" description="In Ref. 1; AAA16630." evidence="3" ref="1">
    <original>G</original>
    <variation>A</variation>
    <location>
        <position position="351"/>
    </location>
</feature>
<sequence>MAPVMRLGSAALRSSIHLTSRQTAFTAARCYSSKTQTLKERFAELLPENIEKIKALRKEHGSKVVDKVTLDQVYGGARGIKCLVWEGSVLDAEEGIRFRGKTIPECQELLPKAPGGKEPLPEGLFWLLLTGEVPSEQQVRDLSAEWAARSDVPKFIEELIDRCPSDLHPMAQLSLAVTALEHTSSFARAYAKGINKKEYWGYTFEDSMDLIAKLPTIAARIYQNVFKGGKVAAVQKDKDYSFNFANQLGFGDNKDFVELLRLYLTIHTDHEGGNVSAHTTHLVGSALSSPFLSVAAGLNGLAGPLHGLANQEVLNWLTEMKKVIGDDLSDEAITKYLWDTLNAGRVVPGYGHAVLRKTDPRYSAQRKFAQEHLPEDPMFQLVSQVYKIAPKVLTEHGKTKNPYPNVDAHSGVLLQHYGLTEANYYTVLFGVSRAIGVLPQLIIDRAVGAPIERPKSYSTDKWIEICKKL</sequence>
<accession>P34085</accession>
<accession>Q7RY26</accession>
<accession>Q9P688</accession>
<comment type="catalytic activity">
    <reaction evidence="2">
        <text>oxaloacetate + acetyl-CoA + H2O = citrate + CoA + H(+)</text>
        <dbReference type="Rhea" id="RHEA:16845"/>
        <dbReference type="ChEBI" id="CHEBI:15377"/>
        <dbReference type="ChEBI" id="CHEBI:15378"/>
        <dbReference type="ChEBI" id="CHEBI:16452"/>
        <dbReference type="ChEBI" id="CHEBI:16947"/>
        <dbReference type="ChEBI" id="CHEBI:57287"/>
        <dbReference type="ChEBI" id="CHEBI:57288"/>
        <dbReference type="EC" id="2.3.3.16"/>
    </reaction>
</comment>
<comment type="pathway">
    <text>Carbohydrate metabolism; tricarboxylic acid cycle; isocitrate from oxaloacetate: step 1/2.</text>
</comment>
<comment type="subcellular location">
    <subcellularLocation>
        <location>Mitochondrion matrix</location>
    </subcellularLocation>
</comment>
<comment type="developmental stage">
    <text>Abundant after 6-12 hours of growth. It is not significantly expressed after 24 hours, which is several hours after entering the stationary phase of growth.</text>
</comment>
<comment type="miscellaneous">
    <text>Citrate synthase is found in nearly all cells capable of oxidative metabolism.</text>
</comment>
<comment type="similarity">
    <text evidence="3">Belongs to the citrate synthase family.</text>
</comment>
<dbReference type="EC" id="2.3.3.16"/>
<dbReference type="EMBL" id="M84187">
    <property type="protein sequence ID" value="AAA16630.1"/>
    <property type="molecule type" value="Unassigned_DNA"/>
</dbReference>
<dbReference type="EMBL" id="AL355927">
    <property type="protein sequence ID" value="CAB91282.1"/>
    <property type="molecule type" value="Genomic_DNA"/>
</dbReference>
<dbReference type="EMBL" id="CM002237">
    <property type="protein sequence ID" value="EAA27662.1"/>
    <property type="molecule type" value="Genomic_DNA"/>
</dbReference>
<dbReference type="PIR" id="S41563">
    <property type="entry name" value="S41563"/>
</dbReference>
<dbReference type="RefSeq" id="XP_956898.1">
    <property type="nucleotide sequence ID" value="XM_951805.3"/>
</dbReference>
<dbReference type="SMR" id="P34085"/>
<dbReference type="FunCoup" id="P34085">
    <property type="interactions" value="928"/>
</dbReference>
<dbReference type="STRING" id="367110.P34085"/>
<dbReference type="PaxDb" id="5141-EFNCRP00000001887"/>
<dbReference type="EnsemblFungi" id="EAA27662">
    <property type="protein sequence ID" value="EAA27662"/>
    <property type="gene ID" value="NCU01692"/>
</dbReference>
<dbReference type="GeneID" id="3873020"/>
<dbReference type="KEGG" id="ncr:NCU01692"/>
<dbReference type="VEuPathDB" id="FungiDB:NCU01692"/>
<dbReference type="HOGENOM" id="CLU_022049_2_1_1"/>
<dbReference type="InParanoid" id="P34085"/>
<dbReference type="OrthoDB" id="8017587at2759"/>
<dbReference type="UniPathway" id="UPA00223">
    <property type="reaction ID" value="UER00717"/>
</dbReference>
<dbReference type="Proteomes" id="UP000001805">
    <property type="component" value="Chromosome 6, Linkage Group II"/>
</dbReference>
<dbReference type="GO" id="GO:0005759">
    <property type="term" value="C:mitochondrial matrix"/>
    <property type="evidence" value="ECO:0000318"/>
    <property type="project" value="GO_Central"/>
</dbReference>
<dbReference type="GO" id="GO:0004108">
    <property type="term" value="F:citrate (Si)-synthase activity"/>
    <property type="evidence" value="ECO:0000318"/>
    <property type="project" value="GO_Central"/>
</dbReference>
<dbReference type="GO" id="GO:0005975">
    <property type="term" value="P:carbohydrate metabolic process"/>
    <property type="evidence" value="ECO:0000318"/>
    <property type="project" value="GO_Central"/>
</dbReference>
<dbReference type="GO" id="GO:0006101">
    <property type="term" value="P:citrate metabolic process"/>
    <property type="evidence" value="ECO:0007669"/>
    <property type="project" value="EnsemblFungi"/>
</dbReference>
<dbReference type="GO" id="GO:0006099">
    <property type="term" value="P:tricarboxylic acid cycle"/>
    <property type="evidence" value="ECO:0000318"/>
    <property type="project" value="GO_Central"/>
</dbReference>
<dbReference type="CDD" id="cd06105">
    <property type="entry name" value="ScCit1-2_like"/>
    <property type="match status" value="1"/>
</dbReference>
<dbReference type="FunFam" id="1.10.230.10:FF:000001">
    <property type="entry name" value="Citrate synthase"/>
    <property type="match status" value="1"/>
</dbReference>
<dbReference type="FunFam" id="1.10.580.10:FF:000001">
    <property type="entry name" value="Citrate synthase"/>
    <property type="match status" value="1"/>
</dbReference>
<dbReference type="Gene3D" id="1.10.580.10">
    <property type="entry name" value="Citrate Synthase, domain 1"/>
    <property type="match status" value="1"/>
</dbReference>
<dbReference type="Gene3D" id="1.10.230.10">
    <property type="entry name" value="Cytochrome P450-Terp, domain 2"/>
    <property type="match status" value="1"/>
</dbReference>
<dbReference type="InterPro" id="IPR016142">
    <property type="entry name" value="Citrate_synth-like_lrg_a-sub"/>
</dbReference>
<dbReference type="InterPro" id="IPR016143">
    <property type="entry name" value="Citrate_synth-like_sm_a-sub"/>
</dbReference>
<dbReference type="InterPro" id="IPR002020">
    <property type="entry name" value="Citrate_synthase"/>
</dbReference>
<dbReference type="InterPro" id="IPR019810">
    <property type="entry name" value="Citrate_synthase_AS"/>
</dbReference>
<dbReference type="InterPro" id="IPR010109">
    <property type="entry name" value="Citrate_synthase_euk"/>
</dbReference>
<dbReference type="InterPro" id="IPR036969">
    <property type="entry name" value="Citrate_synthase_sf"/>
</dbReference>
<dbReference type="NCBIfam" id="TIGR01793">
    <property type="entry name" value="cit_synth_euk"/>
    <property type="match status" value="1"/>
</dbReference>
<dbReference type="NCBIfam" id="NF007128">
    <property type="entry name" value="PRK09569.1"/>
    <property type="match status" value="1"/>
</dbReference>
<dbReference type="PANTHER" id="PTHR11739">
    <property type="entry name" value="CITRATE SYNTHASE"/>
    <property type="match status" value="1"/>
</dbReference>
<dbReference type="PANTHER" id="PTHR11739:SF8">
    <property type="entry name" value="CITRATE SYNTHASE, MITOCHONDRIAL"/>
    <property type="match status" value="1"/>
</dbReference>
<dbReference type="Pfam" id="PF00285">
    <property type="entry name" value="Citrate_synt"/>
    <property type="match status" value="1"/>
</dbReference>
<dbReference type="PRINTS" id="PR00143">
    <property type="entry name" value="CITRTSNTHASE"/>
</dbReference>
<dbReference type="SUPFAM" id="SSF48256">
    <property type="entry name" value="Citrate synthase"/>
    <property type="match status" value="1"/>
</dbReference>
<dbReference type="PROSITE" id="PS00480">
    <property type="entry name" value="CITRATE_SYNTHASE"/>
    <property type="match status" value="1"/>
</dbReference>
<keyword id="KW-0496">Mitochondrion</keyword>
<keyword id="KW-1185">Reference proteome</keyword>
<keyword id="KW-0808">Transferase</keyword>
<keyword id="KW-0809">Transit peptide</keyword>
<keyword id="KW-0816">Tricarboxylic acid cycle</keyword>
<reference key="1">
    <citation type="journal article" date="1994" name="Mol. Gen. Genet.">
        <title>Characterization of the cit-1 gene from Neurospora crassa encoding the mitochondrial form of citrate synthase.</title>
        <authorList>
            <person name="Ferea T."/>
            <person name="Contreras E.T."/>
            <person name="Oung T."/>
            <person name="Bowman E.J."/>
            <person name="Bowman B.J."/>
        </authorList>
    </citation>
    <scope>NUCLEOTIDE SEQUENCE</scope>
    <source>
        <strain>74A</strain>
    </source>
</reference>
<reference key="2">
    <citation type="journal article" date="2003" name="Nucleic Acids Res.">
        <title>What's in the genome of a filamentous fungus? Analysis of the Neurospora genome sequence.</title>
        <authorList>
            <person name="Mannhaupt G."/>
            <person name="Montrone C."/>
            <person name="Haase D."/>
            <person name="Mewes H.-W."/>
            <person name="Aign V."/>
            <person name="Hoheisel J.D."/>
            <person name="Fartmann B."/>
            <person name="Nyakatura G."/>
            <person name="Kempken F."/>
            <person name="Maier J."/>
            <person name="Schulte U."/>
        </authorList>
    </citation>
    <scope>NUCLEOTIDE SEQUENCE [LARGE SCALE GENOMIC DNA]</scope>
    <source>
        <strain>ATCC 24698 / 74-OR23-1A / CBS 708.71 / DSM 1257 / FGSC 987</strain>
    </source>
</reference>
<reference key="3">
    <citation type="journal article" date="2003" name="Nature">
        <title>The genome sequence of the filamentous fungus Neurospora crassa.</title>
        <authorList>
            <person name="Galagan J.E."/>
            <person name="Calvo S.E."/>
            <person name="Borkovich K.A."/>
            <person name="Selker E.U."/>
            <person name="Read N.D."/>
            <person name="Jaffe D.B."/>
            <person name="FitzHugh W."/>
            <person name="Ma L.-J."/>
            <person name="Smirnov S."/>
            <person name="Purcell S."/>
            <person name="Rehman B."/>
            <person name="Elkins T."/>
            <person name="Engels R."/>
            <person name="Wang S."/>
            <person name="Nielsen C.B."/>
            <person name="Butler J."/>
            <person name="Endrizzi M."/>
            <person name="Qui D."/>
            <person name="Ianakiev P."/>
            <person name="Bell-Pedersen D."/>
            <person name="Nelson M.A."/>
            <person name="Werner-Washburne M."/>
            <person name="Selitrennikoff C.P."/>
            <person name="Kinsey J.A."/>
            <person name="Braun E.L."/>
            <person name="Zelter A."/>
            <person name="Schulte U."/>
            <person name="Kothe G.O."/>
            <person name="Jedd G."/>
            <person name="Mewes H.-W."/>
            <person name="Staben C."/>
            <person name="Marcotte E."/>
            <person name="Greenberg D."/>
            <person name="Roy A."/>
            <person name="Foley K."/>
            <person name="Naylor J."/>
            <person name="Stange-Thomann N."/>
            <person name="Barrett R."/>
            <person name="Gnerre S."/>
            <person name="Kamal M."/>
            <person name="Kamvysselis M."/>
            <person name="Mauceli E.W."/>
            <person name="Bielke C."/>
            <person name="Rudd S."/>
            <person name="Frishman D."/>
            <person name="Krystofova S."/>
            <person name="Rasmussen C."/>
            <person name="Metzenberg R.L."/>
            <person name="Perkins D.D."/>
            <person name="Kroken S."/>
            <person name="Cogoni C."/>
            <person name="Macino G."/>
            <person name="Catcheside D.E.A."/>
            <person name="Li W."/>
            <person name="Pratt R.J."/>
            <person name="Osmani S.A."/>
            <person name="DeSouza C.P.C."/>
            <person name="Glass N.L."/>
            <person name="Orbach M.J."/>
            <person name="Berglund J.A."/>
            <person name="Voelker R."/>
            <person name="Yarden O."/>
            <person name="Plamann M."/>
            <person name="Seiler S."/>
            <person name="Dunlap J.C."/>
            <person name="Radford A."/>
            <person name="Aramayo R."/>
            <person name="Natvig D.O."/>
            <person name="Alex L.A."/>
            <person name="Mannhaupt G."/>
            <person name="Ebbole D.J."/>
            <person name="Freitag M."/>
            <person name="Paulsen I."/>
            <person name="Sachs M.S."/>
            <person name="Lander E.S."/>
            <person name="Nusbaum C."/>
            <person name="Birren B.W."/>
        </authorList>
    </citation>
    <scope>NUCLEOTIDE SEQUENCE [LARGE SCALE GENOMIC DNA]</scope>
    <source>
        <strain>ATCC 24698 / 74-OR23-1A / CBS 708.71 / DSM 1257 / FGSC 987</strain>
    </source>
</reference>
<gene>
    <name type="primary">cit-1</name>
    <name type="ORF">B1D1.330</name>
    <name type="ORF">NCU01692</name>
</gene>
<organism>
    <name type="scientific">Neurospora crassa (strain ATCC 24698 / 74-OR23-1A / CBS 708.71 / DSM 1257 / FGSC 987)</name>
    <dbReference type="NCBI Taxonomy" id="367110"/>
    <lineage>
        <taxon>Eukaryota</taxon>
        <taxon>Fungi</taxon>
        <taxon>Dikarya</taxon>
        <taxon>Ascomycota</taxon>
        <taxon>Pezizomycotina</taxon>
        <taxon>Sordariomycetes</taxon>
        <taxon>Sordariomycetidae</taxon>
        <taxon>Sordariales</taxon>
        <taxon>Sordariaceae</taxon>
        <taxon>Neurospora</taxon>
    </lineage>
</organism>
<name>CISY_NEUCR</name>
<protein>
    <recommendedName>
        <fullName>Citrate synthase, mitochondrial</fullName>
        <ecNumber>2.3.3.16</ecNumber>
    </recommendedName>
</protein>